<feature type="chain" id="PRO_0000084335" description="Protein KTI12">
    <location>
        <begin position="1"/>
        <end position="313"/>
    </location>
</feature>
<feature type="binding site" evidence="1">
    <location>
        <begin position="8"/>
        <end position="15"/>
    </location>
    <ligand>
        <name>ATP</name>
        <dbReference type="ChEBI" id="CHEBI:30616"/>
    </ligand>
</feature>
<feature type="sequence conflict" description="In Ref. 5; AAA66312." evidence="14" ref="5">
    <original>N</original>
    <variation>D</variation>
    <location>
        <position position="103"/>
    </location>
</feature>
<feature type="sequence conflict" description="In Ref. 5; AAA66312." evidence="14" ref="5">
    <original>S</original>
    <variation>N</variation>
    <location>
        <position position="150"/>
    </location>
</feature>
<organism>
    <name type="scientific">Saccharomyces cerevisiae (strain ATCC 204508 / S288c)</name>
    <name type="common">Baker's yeast</name>
    <dbReference type="NCBI Taxonomy" id="559292"/>
    <lineage>
        <taxon>Eukaryota</taxon>
        <taxon>Fungi</taxon>
        <taxon>Dikarya</taxon>
        <taxon>Ascomycota</taxon>
        <taxon>Saccharomycotina</taxon>
        <taxon>Saccharomycetes</taxon>
        <taxon>Saccharomycetales</taxon>
        <taxon>Saccharomycetaceae</taxon>
        <taxon>Saccharomyces</taxon>
    </lineage>
</organism>
<keyword id="KW-0067">ATP-binding</keyword>
<keyword id="KW-0963">Cytoplasm</keyword>
<keyword id="KW-0547">Nucleotide-binding</keyword>
<keyword id="KW-0539">Nucleus</keyword>
<keyword id="KW-1185">Reference proteome</keyword>
<keyword id="KW-0804">Transcription</keyword>
<keyword id="KW-0805">Transcription regulation</keyword>
<dbReference type="EMBL" id="X77511">
    <property type="protein sequence ID" value="CAA54646.1"/>
    <property type="molecule type" value="Genomic_DNA"/>
</dbReference>
<dbReference type="EMBL" id="X71133">
    <property type="protein sequence ID" value="CAA50447.1"/>
    <property type="molecule type" value="Genomic_DNA"/>
</dbReference>
<dbReference type="EMBL" id="S93804">
    <property type="protein sequence ID" value="AAB22001.1"/>
    <property type="molecule type" value="Genomic_DNA"/>
</dbReference>
<dbReference type="EMBL" id="Z28110">
    <property type="protein sequence ID" value="CAA81950.1"/>
    <property type="molecule type" value="Genomic_DNA"/>
</dbReference>
<dbReference type="EMBL" id="M29067">
    <property type="protein sequence ID" value="AAA66312.1"/>
    <property type="molecule type" value="Genomic_DNA"/>
</dbReference>
<dbReference type="EMBL" id="BK006944">
    <property type="protein sequence ID" value="DAA09047.1"/>
    <property type="molecule type" value="Genomic_DNA"/>
</dbReference>
<dbReference type="PIR" id="S37937">
    <property type="entry name" value="S37937"/>
</dbReference>
<dbReference type="RefSeq" id="NP_012812.1">
    <property type="nucleotide sequence ID" value="NM_001179676.1"/>
</dbReference>
<dbReference type="SMR" id="P34253"/>
<dbReference type="BioGRID" id="34023">
    <property type="interactions" value="333"/>
</dbReference>
<dbReference type="DIP" id="DIP-1856N"/>
<dbReference type="FunCoup" id="P34253">
    <property type="interactions" value="765"/>
</dbReference>
<dbReference type="IntAct" id="P34253">
    <property type="interactions" value="7"/>
</dbReference>
<dbReference type="MINT" id="P34253"/>
<dbReference type="STRING" id="4932.YKL110C"/>
<dbReference type="GlyGen" id="P34253">
    <property type="glycosylation" value="1 site"/>
</dbReference>
<dbReference type="iPTMnet" id="P34253"/>
<dbReference type="PaxDb" id="4932-YKL110C"/>
<dbReference type="PeptideAtlas" id="P34253"/>
<dbReference type="EnsemblFungi" id="YKL110C_mRNA">
    <property type="protein sequence ID" value="YKL110C"/>
    <property type="gene ID" value="YKL110C"/>
</dbReference>
<dbReference type="GeneID" id="853750"/>
<dbReference type="KEGG" id="sce:YKL110C"/>
<dbReference type="AGR" id="SGD:S000001593"/>
<dbReference type="SGD" id="S000001593">
    <property type="gene designation" value="KTI12"/>
</dbReference>
<dbReference type="VEuPathDB" id="FungiDB:YKL110C"/>
<dbReference type="eggNOG" id="KOG3062">
    <property type="taxonomic scope" value="Eukaryota"/>
</dbReference>
<dbReference type="GeneTree" id="ENSGT00390000002443"/>
<dbReference type="HOGENOM" id="CLU_027147_2_0_1"/>
<dbReference type="InParanoid" id="P34253"/>
<dbReference type="OMA" id="THSRWDK"/>
<dbReference type="OrthoDB" id="9972657at2759"/>
<dbReference type="BioCyc" id="YEAST:G3O-31896-MONOMER"/>
<dbReference type="BioGRID-ORCS" id="853750">
    <property type="hits" value="1 hit in 10 CRISPR screens"/>
</dbReference>
<dbReference type="PRO" id="PR:P34253"/>
<dbReference type="Proteomes" id="UP000002311">
    <property type="component" value="Chromosome XI"/>
</dbReference>
<dbReference type="RNAct" id="P34253">
    <property type="molecule type" value="protein"/>
</dbReference>
<dbReference type="GO" id="GO:0005737">
    <property type="term" value="C:cytoplasm"/>
    <property type="evidence" value="ECO:0000314"/>
    <property type="project" value="SGD"/>
</dbReference>
<dbReference type="GO" id="GO:0005634">
    <property type="term" value="C:nucleus"/>
    <property type="evidence" value="ECO:0000314"/>
    <property type="project" value="SGD"/>
</dbReference>
<dbReference type="GO" id="GO:0005524">
    <property type="term" value="F:ATP binding"/>
    <property type="evidence" value="ECO:0007669"/>
    <property type="project" value="UniProtKB-KW"/>
</dbReference>
<dbReference type="GO" id="GO:0003682">
    <property type="term" value="F:chromatin binding"/>
    <property type="evidence" value="ECO:0000314"/>
    <property type="project" value="SGD"/>
</dbReference>
<dbReference type="GO" id="GO:0006357">
    <property type="term" value="P:regulation of transcription by RNA polymerase II"/>
    <property type="evidence" value="ECO:0000316"/>
    <property type="project" value="SGD"/>
</dbReference>
<dbReference type="GO" id="GO:0002098">
    <property type="term" value="P:tRNA wobble uridine modification"/>
    <property type="evidence" value="ECO:0000315"/>
    <property type="project" value="SGD"/>
</dbReference>
<dbReference type="FunFam" id="3.40.50.300:FF:000827">
    <property type="entry name" value="KTI12 chromatin-associated homolog"/>
    <property type="match status" value="1"/>
</dbReference>
<dbReference type="Gene3D" id="3.40.50.300">
    <property type="entry name" value="P-loop containing nucleotide triphosphate hydrolases"/>
    <property type="match status" value="1"/>
</dbReference>
<dbReference type="InterPro" id="IPR013641">
    <property type="entry name" value="KTI12/PSTK"/>
</dbReference>
<dbReference type="InterPro" id="IPR027417">
    <property type="entry name" value="P-loop_NTPase"/>
</dbReference>
<dbReference type="PANTHER" id="PTHR12435">
    <property type="match status" value="1"/>
</dbReference>
<dbReference type="Pfam" id="PF08433">
    <property type="entry name" value="KTI12"/>
    <property type="match status" value="1"/>
</dbReference>
<dbReference type="SUPFAM" id="SSF52540">
    <property type="entry name" value="P-loop containing nucleoside triphosphate hydrolases"/>
    <property type="match status" value="1"/>
</dbReference>
<comment type="function">
    <text evidence="2 3 5 8 9 10 13">Elongator complex-associated factor that is not a structural subunit but rather transiently contacts the complex. Regulates elongator complex gamma-toxin target (TOT) activity, resulting in G1 block by Kluyveromyces lactis toxin zymocin (pGKL1 killer toxin), probably through regulation of the ELP1/IKI3 subunit phosphorylation state. Required for an early step in synthesis of 5-methoxycarbonylmethyl (mcm5) and 5-carbamoylmethyl (ncm5) groups present on uridines at the wobble position in tRNA.</text>
</comment>
<comment type="subunit">
    <text evidence="2 3 4 5 8 10 11 12">Interacts with the elongator complex.</text>
</comment>
<comment type="subcellular location">
    <subcellularLocation>
        <location evidence="6">Cytoplasm</location>
    </subcellularLocation>
    <subcellularLocation>
        <location evidence="6">Nucleus</location>
    </subcellularLocation>
</comment>
<comment type="miscellaneous">
    <text evidence="7">Present with 5260 molecules/cell in log phase SD medium.</text>
</comment>
<comment type="similarity">
    <text evidence="14">Belongs to the KTI12 family.</text>
</comment>
<sequence>MPLVLFTGYPCSGKTTLAKHLVQLLQSKIDATPSLSKYSITYHSDESLGIKHSDYITSQDERKLRSEIISAVKRDLSKNKIVIVDSLNYIKGFRYQLHCEVKNLSTTFCVIQTLCPPETIFEWNKTSNPNPWEPELLNQLIQRYEEPNSSNRWDSPLFAILTPQDNITDYIDDICKVVFQTSKSAKNSGHNDPLSKGLQKPNSATVLKPASQSNFIQVLDIETSKIIKTIMNHIKSLTSIGGVSNGTRVIVSEGITDINDDGCFFVDLPIGNVVTLAQLQRLKRQFINFNKLRDIDQDRIGPLFADYLNKNLN</sequence>
<proteinExistence type="evidence at protein level"/>
<protein>
    <recommendedName>
        <fullName>Protein KTI12</fullName>
    </recommendedName>
    <alternativeName>
        <fullName>Gamma-toxin target protein 4</fullName>
    </alternativeName>
    <alternativeName>
        <fullName>Killer toxin insensitivity protein 12</fullName>
    </alternativeName>
</protein>
<accession>P34253</accession>
<accession>D6VXH7</accession>
<accession>Q05155</accession>
<gene>
    <name type="primary">KTI12</name>
    <name type="ordered locus">YKL110C</name>
    <name type="ORF">YKL446</name>
    <name type="ORF">YKL500</name>
</gene>
<reference key="1">
    <citation type="journal article" date="1994" name="Mol. Cell. Biol.">
        <title>Two Saccharomyces cerevisiae genes which control sensitivity to G1 arrest induced by Kluyveromyces lactis toxin.</title>
        <authorList>
            <person name="Butler A.R."/>
            <person name="White J.H."/>
            <person name="Folawiyo Y."/>
            <person name="Edlin A."/>
            <person name="Gardiner D."/>
            <person name="Stark M.J.R."/>
        </authorList>
    </citation>
    <scope>NUCLEOTIDE SEQUENCE [GENOMIC DNA]</scope>
    <scope>FUNCTION</scope>
</reference>
<reference key="2">
    <citation type="journal article" date="1994" name="Nature">
        <title>Complete DNA sequence of yeast chromosome XI.</title>
        <authorList>
            <person name="Dujon B."/>
            <person name="Alexandraki D."/>
            <person name="Andre B."/>
            <person name="Ansorge W."/>
            <person name="Baladron V."/>
            <person name="Ballesta J.P.G."/>
            <person name="Banrevi A."/>
            <person name="Bolle P.-A."/>
            <person name="Bolotin-Fukuhara M."/>
            <person name="Bossier P."/>
            <person name="Bou G."/>
            <person name="Boyer J."/>
            <person name="Buitrago M.J."/>
            <person name="Cheret G."/>
            <person name="Colleaux L."/>
            <person name="Daignan-Fornier B."/>
            <person name="del Rey F."/>
            <person name="Dion C."/>
            <person name="Domdey H."/>
            <person name="Duesterhoeft A."/>
            <person name="Duesterhus S."/>
            <person name="Entian K.-D."/>
            <person name="Erfle H."/>
            <person name="Esteban P.F."/>
            <person name="Feldmann H."/>
            <person name="Fernandes L."/>
            <person name="Fobo G.M."/>
            <person name="Fritz C."/>
            <person name="Fukuhara H."/>
            <person name="Gabel C."/>
            <person name="Gaillon L."/>
            <person name="Garcia-Cantalejo J.M."/>
            <person name="Garcia-Ramirez J.J."/>
            <person name="Gent M.E."/>
            <person name="Ghazvini M."/>
            <person name="Goffeau A."/>
            <person name="Gonzalez A."/>
            <person name="Grothues D."/>
            <person name="Guerreiro P."/>
            <person name="Hegemann J.H."/>
            <person name="Hewitt N."/>
            <person name="Hilger F."/>
            <person name="Hollenberg C.P."/>
            <person name="Horaitis O."/>
            <person name="Indge K.J."/>
            <person name="Jacquier A."/>
            <person name="James C.M."/>
            <person name="Jauniaux J.-C."/>
            <person name="Jimenez A."/>
            <person name="Keuchel H."/>
            <person name="Kirchrath L."/>
            <person name="Kleine K."/>
            <person name="Koetter P."/>
            <person name="Legrain P."/>
            <person name="Liebl S."/>
            <person name="Louis E.J."/>
            <person name="Maia e Silva A."/>
            <person name="Marck C."/>
            <person name="Monnier A.-L."/>
            <person name="Moestl D."/>
            <person name="Mueller S."/>
            <person name="Obermaier B."/>
            <person name="Oliver S.G."/>
            <person name="Pallier C."/>
            <person name="Pascolo S."/>
            <person name="Pfeiffer F."/>
            <person name="Philippsen P."/>
            <person name="Planta R.J."/>
            <person name="Pohl F.M."/>
            <person name="Pohl T.M."/>
            <person name="Poehlmann R."/>
            <person name="Portetelle D."/>
            <person name="Purnelle B."/>
            <person name="Puzos V."/>
            <person name="Ramezani Rad M."/>
            <person name="Rasmussen S.W."/>
            <person name="Remacha M.A."/>
            <person name="Revuelta J.L."/>
            <person name="Richard G.-F."/>
            <person name="Rieger M."/>
            <person name="Rodrigues-Pousada C."/>
            <person name="Rose M."/>
            <person name="Rupp T."/>
            <person name="Santos M.A."/>
            <person name="Schwager C."/>
            <person name="Sensen C."/>
            <person name="Skala J."/>
            <person name="Soares H."/>
            <person name="Sor F."/>
            <person name="Stegemann J."/>
            <person name="Tettelin H."/>
            <person name="Thierry A."/>
            <person name="Tzermia M."/>
            <person name="Urrestarazu L.A."/>
            <person name="van Dyck L."/>
            <person name="van Vliet-Reedijk J.C."/>
            <person name="Valens M."/>
            <person name="Vandenbol M."/>
            <person name="Vilela C."/>
            <person name="Vissers S."/>
            <person name="von Wettstein D."/>
            <person name="Voss H."/>
            <person name="Wiemann S."/>
            <person name="Xu G."/>
            <person name="Zimmermann J."/>
            <person name="Haasemann M."/>
            <person name="Becker I."/>
            <person name="Mewes H.-W."/>
        </authorList>
    </citation>
    <scope>NUCLEOTIDE SEQUENCE [LARGE SCALE GENOMIC DNA]</scope>
    <source>
        <strain>ATCC 204508 / S288c</strain>
    </source>
</reference>
<reference key="3">
    <citation type="journal article" date="2014" name="G3 (Bethesda)">
        <title>The reference genome sequence of Saccharomyces cerevisiae: Then and now.</title>
        <authorList>
            <person name="Engel S.R."/>
            <person name="Dietrich F.S."/>
            <person name="Fisk D.G."/>
            <person name="Binkley G."/>
            <person name="Balakrishnan R."/>
            <person name="Costanzo M.C."/>
            <person name="Dwight S.S."/>
            <person name="Hitz B.C."/>
            <person name="Karra K."/>
            <person name="Nash R.S."/>
            <person name="Weng S."/>
            <person name="Wong E.D."/>
            <person name="Lloyd P."/>
            <person name="Skrzypek M.S."/>
            <person name="Miyasato S.R."/>
            <person name="Simison M."/>
            <person name="Cherry J.M."/>
        </authorList>
    </citation>
    <scope>GENOME REANNOTATION</scope>
    <source>
        <strain>ATCC 204508 / S288c</strain>
    </source>
</reference>
<reference key="4">
    <citation type="journal article" date="1993" name="Yeast">
        <title>The DNA sequence analysis of the HAP4-LAP4 region on chromosome XI of Saccharomyces cerevisiae suggests the presence of a second aspartate aminotransferase gene in yeast.</title>
        <authorList>
            <person name="Cheret G."/>
            <person name="Pallier C."/>
            <person name="Valens M."/>
            <person name="Daignan-Fornier B."/>
            <person name="Fukuhara H."/>
            <person name="Bolotin-Fukuhara M."/>
            <person name="Sor F."/>
        </authorList>
    </citation>
    <scope>NUCLEOTIDE SEQUENCE [GENOMIC DNA] OF 1-75</scope>
</reference>
<reference key="5">
    <citation type="journal article" date="1992" name="Yeast">
        <title>Sequence of a 10.7 kb segment of yeast chromosome XI identifies the APN1 and the BAF1 loci and reveals one tRNA gene and several new open reading frames including homologs to RAD2 and kinases.</title>
        <authorList>
            <person name="Jacquier A."/>
            <person name="Legrain P."/>
            <person name="Dujon B."/>
        </authorList>
    </citation>
    <scope>NUCLEOTIDE SEQUENCE [GENOMIC DNA] OF 75-313</scope>
</reference>
<reference key="6">
    <citation type="journal article" date="1989" name="Science">
        <title>Similarity between the transcriptional silencer binding proteins ABF1 and RAP1.</title>
        <authorList>
            <person name="Diffley J.F.X."/>
            <person name="Stillman B."/>
        </authorList>
    </citation>
    <scope>NUCLEOTIDE SEQUENCE [GENOMIC DNA] OF 103-313</scope>
</reference>
<reference key="7">
    <citation type="journal article" date="2001" name="EMBO J.">
        <title>Saccharomyces cerevisiae Elongator mutations confer resistance to the Kluyveromyces lactis zymocin.</title>
        <authorList>
            <person name="Frohloff F."/>
            <person name="Fichtner L."/>
            <person name="Jablonowski D."/>
            <person name="Breunig K.D."/>
            <person name="Schaffrath R."/>
        </authorList>
    </citation>
    <scope>FUNCTION</scope>
    <scope>INTERACTION WITH THE ELONGATOR COMPLEX</scope>
</reference>
<reference key="8">
    <citation type="journal article" date="2002" name="Mol. Microbiol.">
        <title>Molecular analysis of KTI12/TOT4, a Saccharomyces cerevisiae gene required for Kluyveromyces lactis zymocin action.</title>
        <authorList>
            <person name="Fichtner L."/>
            <person name="Frohloff F."/>
            <person name="Buerkner K."/>
            <person name="Larsen M."/>
            <person name="Breunig K.D."/>
            <person name="Schaffrath R."/>
        </authorList>
    </citation>
    <scope>FUNCTION</scope>
    <scope>INTERACTION WITH THE ELONGATOR COMPLEX</scope>
</reference>
<reference key="9">
    <citation type="journal article" date="2002" name="Mol. Microbiol.">
        <title>Protein interactions within Saccharomyces cerevisiae Elongator, a complex essential for Kluyveromyces lactis zymocicity.</title>
        <authorList>
            <person name="Fichtner L."/>
            <person name="Frohloff F."/>
            <person name="Jablonowski D."/>
            <person name="Stark M.J.R."/>
            <person name="Schaffrath R."/>
        </authorList>
    </citation>
    <scope>INTERACTION WITH THE ELONGATOR COMPLEX</scope>
</reference>
<reference key="10">
    <citation type="journal article" date="2003" name="J. Biol. Chem.">
        <title>Subunit communications crucial for the functional integrity of the yeast RNA polymerase II elongator (gamma-toxin target (TOT)) complex.</title>
        <authorList>
            <person name="Frohloff F."/>
            <person name="Jablonowski D."/>
            <person name="Fichtner L."/>
            <person name="Schaffrath R."/>
        </authorList>
    </citation>
    <scope>FUNCTION</scope>
    <scope>INTERACTION WITH THE ELONGATOR COMPLEX</scope>
</reference>
<reference key="11">
    <citation type="journal article" date="2003" name="Nature">
        <title>Global analysis of protein localization in budding yeast.</title>
        <authorList>
            <person name="Huh W.-K."/>
            <person name="Falvo J.V."/>
            <person name="Gerke L.C."/>
            <person name="Carroll A.S."/>
            <person name="Howson R.W."/>
            <person name="Weissman J.S."/>
            <person name="O'Shea E.K."/>
        </authorList>
    </citation>
    <scope>SUBCELLULAR LOCATION [LARGE SCALE ANALYSIS]</scope>
</reference>
<reference key="12">
    <citation type="journal article" date="2003" name="Nature">
        <title>Global analysis of protein expression in yeast.</title>
        <authorList>
            <person name="Ghaemmaghami S."/>
            <person name="Huh W.-K."/>
            <person name="Bower K."/>
            <person name="Howson R.W."/>
            <person name="Belle A."/>
            <person name="Dephoure N."/>
            <person name="O'Shea E.K."/>
            <person name="Weissman J.S."/>
        </authorList>
    </citation>
    <scope>LEVEL OF PROTEIN EXPRESSION [LARGE SCALE ANALYSIS]</scope>
</reference>
<reference key="13">
    <citation type="journal article" date="2004" name="Mol. Biol. Cell">
        <title>The yeast elongator histone acetylase requires Sit4-dependent dephosphorylation for toxin-target capacity.</title>
        <authorList>
            <person name="Jablonowski D."/>
            <person name="Fichtner L."/>
            <person name="Stark M.J.R."/>
            <person name="Schaffrath R."/>
        </authorList>
    </citation>
    <scope>FUNCTION</scope>
    <scope>INTERACTION WITH THE ELONGATOR COMPLEX</scope>
</reference>
<reference key="14">
    <citation type="journal article" date="2005" name="J. Biol. Chem.">
        <title>Physical and functional interaction between Elongator and the chromatin-associated Kti12 protein.</title>
        <authorList>
            <person name="Petrakis T.G."/>
            <person name="Soegaard T.M.M."/>
            <person name="Erdjument-Bromage H."/>
            <person name="Tempst P."/>
            <person name="Svejstrup J.Q."/>
        </authorList>
    </citation>
    <scope>FUNCTION</scope>
    <scope>INTERACTION WITH THE ELONGATOR COMPLEX</scope>
    <scope>CHROMATIN BINDING</scope>
</reference>
<reference key="15">
    <citation type="journal article" date="2005" name="RNA">
        <title>An early step in wobble uridine tRNA modification requires the Elongator complex.</title>
        <authorList>
            <person name="Huang B."/>
            <person name="Johansson M.J.O."/>
            <person name="Bystroem A.S."/>
        </authorList>
    </citation>
    <scope>FUNCTION</scope>
</reference>
<reference key="16">
    <citation type="journal article" date="2009" name="J. Biol. Chem.">
        <title>An iron-sulfur cluster domain in Elp3 important for the structural integrity of elongator.</title>
        <authorList>
            <person name="Greenwood C."/>
            <person name="Selth L.A."/>
            <person name="Dirac-Svejstrup A.B."/>
            <person name="Svejstrup J.Q."/>
        </authorList>
    </citation>
    <scope>INTERACTION WITH THE ELONGATOR COMPLEX</scope>
</reference>
<reference key="17">
    <citation type="journal article" date="2015" name="PLoS Genet.">
        <title>Phosphorylation of Elp1 by Hrr25 is required for elongator-dependent tRNA modification in yeast.</title>
        <authorList>
            <person name="Abdel-Fattah W."/>
            <person name="Jablonowski D."/>
            <person name="Di Santo R."/>
            <person name="Thuering K.L."/>
            <person name="Scheidt V."/>
            <person name="Hammermeister A."/>
            <person name="Ten Have S."/>
            <person name="Helm M."/>
            <person name="Schaffrath R."/>
            <person name="Stark M.J."/>
        </authorList>
    </citation>
    <scope>INTERACTION WITH ELONGATOR COMPLEX COMPONENT ELP1</scope>
</reference>
<name>KTI12_YEAST</name>
<evidence type="ECO:0000255" key="1"/>
<evidence type="ECO:0000269" key="2">
    <source>
    </source>
</evidence>
<evidence type="ECO:0000269" key="3">
    <source>
    </source>
</evidence>
<evidence type="ECO:0000269" key="4">
    <source>
    </source>
</evidence>
<evidence type="ECO:0000269" key="5">
    <source>
    </source>
</evidence>
<evidence type="ECO:0000269" key="6">
    <source>
    </source>
</evidence>
<evidence type="ECO:0000269" key="7">
    <source>
    </source>
</evidence>
<evidence type="ECO:0000269" key="8">
    <source>
    </source>
</evidence>
<evidence type="ECO:0000269" key="9">
    <source>
    </source>
</evidence>
<evidence type="ECO:0000269" key="10">
    <source>
    </source>
</evidence>
<evidence type="ECO:0000269" key="11">
    <source>
    </source>
</evidence>
<evidence type="ECO:0000269" key="12">
    <source>
    </source>
</evidence>
<evidence type="ECO:0000269" key="13">
    <source>
    </source>
</evidence>
<evidence type="ECO:0000305" key="14"/>